<proteinExistence type="evidence at transcript level"/>
<sequence>MLGMIKNSLFGSVETWPWQVLSKGDKQDISYEERACEGGKFATVEMTDKPVDEALREAMPKVMKYVGGSNDKGIGMGMTVPISFAVFPSDGGSLQKKLKVWFRIPNEFQSNPPVPSDDSIKIEERESITVYSLQFGGYAKEADYVARAAQLRTALEGIATCRSDVYFCTGYDPPMKPYGRRNEVWLVKA</sequence>
<evidence type="ECO:0000250" key="1"/>
<evidence type="ECO:0000305" key="2"/>
<comment type="function">
    <text evidence="1">May bind free porphyrinogens that may be present in the cell and thus facilitate removal of these potentially toxic compound. Binds with a high affinity to one molecule of heme or porphyrins. It binds metalloporphyrins, free porphyrins and N-methylprotoporphyrin with similar affinities (By similarity).</text>
</comment>
<comment type="subunit">
    <text evidence="1">Monomer.</text>
</comment>
<comment type="subcellular location">
    <subcellularLocation>
        <location evidence="1">Cytoplasm</location>
    </subcellularLocation>
</comment>
<comment type="domain">
    <text evidence="1">Forms a distorted beta-barrel structure, with two helices that are packed against the outer surface of the barrel. Porphyrins are expected to bind to a hydrophobic patch on the outer surface of the beta-barrel structure (By similarity).</text>
</comment>
<comment type="similarity">
    <text evidence="2">Belongs to the HEBP family.</text>
</comment>
<dbReference type="EMBL" id="AY662687">
    <property type="protein sequence ID" value="AAU10512.1"/>
    <property type="molecule type" value="mRNA"/>
</dbReference>
<dbReference type="RefSeq" id="NP_001011509.1">
    <property type="nucleotide sequence ID" value="NM_001011509.1"/>
</dbReference>
<dbReference type="SMR" id="Q5ISC6"/>
<dbReference type="FunCoup" id="Q5ISC6">
    <property type="interactions" value="17"/>
</dbReference>
<dbReference type="STRING" id="9823.ENSSSCP00000034576"/>
<dbReference type="PaxDb" id="9823-ENSSSCP00000000651"/>
<dbReference type="PeptideAtlas" id="Q5ISC6"/>
<dbReference type="Ensembl" id="ENSSSCT00000055007.3">
    <property type="protein sequence ID" value="ENSSSCP00000034576.2"/>
    <property type="gene ID" value="ENSSSCG00000040275.3"/>
</dbReference>
<dbReference type="Ensembl" id="ENSSSCT00035067455.1">
    <property type="protein sequence ID" value="ENSSSCP00035027338.1"/>
    <property type="gene ID" value="ENSSSCG00035050626.1"/>
</dbReference>
<dbReference type="Ensembl" id="ENSSSCT00040035245.1">
    <property type="protein sequence ID" value="ENSSSCP00040014611.1"/>
    <property type="gene ID" value="ENSSSCG00040026265.1"/>
</dbReference>
<dbReference type="Ensembl" id="ENSSSCT00045008296.1">
    <property type="protein sequence ID" value="ENSSSCP00045005642.1"/>
    <property type="gene ID" value="ENSSSCG00045004985.1"/>
</dbReference>
<dbReference type="Ensembl" id="ENSSSCT00050054615.1">
    <property type="protein sequence ID" value="ENSSSCP00050023060.1"/>
    <property type="gene ID" value="ENSSSCG00050040387.1"/>
</dbReference>
<dbReference type="Ensembl" id="ENSSSCT00055015865.1">
    <property type="protein sequence ID" value="ENSSSCP00055012476.1"/>
    <property type="gene ID" value="ENSSSCG00055008075.1"/>
</dbReference>
<dbReference type="Ensembl" id="ENSSSCT00060077498.1">
    <property type="protein sequence ID" value="ENSSSCP00060033492.1"/>
    <property type="gene ID" value="ENSSSCG00060056871.1"/>
</dbReference>
<dbReference type="Ensembl" id="ENSSSCT00090026217">
    <property type="protein sequence ID" value="ENSSSCP00090016149"/>
    <property type="gene ID" value="ENSSSCG00090014926"/>
</dbReference>
<dbReference type="Ensembl" id="ENSSSCT00115005053">
    <property type="protein sequence ID" value="ENSSSCP00115004691"/>
    <property type="gene ID" value="ENSSSCG00115003021"/>
</dbReference>
<dbReference type="Ensembl" id="ENSSSCT00130026430">
    <property type="protein sequence ID" value="ENSSSCP00130018075"/>
    <property type="gene ID" value="ENSSSCG00130017986"/>
</dbReference>
<dbReference type="GeneID" id="494567"/>
<dbReference type="KEGG" id="ssc:494567"/>
<dbReference type="CTD" id="50865"/>
<dbReference type="VGNC" id="VGNC:88830">
    <property type="gene designation" value="HEBP1"/>
</dbReference>
<dbReference type="eggNOG" id="ENOG502RYZW">
    <property type="taxonomic scope" value="Eukaryota"/>
</dbReference>
<dbReference type="GeneTree" id="ENSGT00940000160320"/>
<dbReference type="HOGENOM" id="CLU_068699_3_1_1"/>
<dbReference type="InParanoid" id="Q5ISC6"/>
<dbReference type="OrthoDB" id="9980274at2759"/>
<dbReference type="Proteomes" id="UP000008227">
    <property type="component" value="Chromosome 5"/>
</dbReference>
<dbReference type="Proteomes" id="UP000314985">
    <property type="component" value="Unplaced"/>
</dbReference>
<dbReference type="Proteomes" id="UP000694570">
    <property type="component" value="Unplaced"/>
</dbReference>
<dbReference type="Proteomes" id="UP000694571">
    <property type="component" value="Unplaced"/>
</dbReference>
<dbReference type="Proteomes" id="UP000694720">
    <property type="component" value="Unplaced"/>
</dbReference>
<dbReference type="Proteomes" id="UP000694722">
    <property type="component" value="Unplaced"/>
</dbReference>
<dbReference type="Proteomes" id="UP000694723">
    <property type="component" value="Unplaced"/>
</dbReference>
<dbReference type="Proteomes" id="UP000694724">
    <property type="component" value="Unplaced"/>
</dbReference>
<dbReference type="Proteomes" id="UP000694725">
    <property type="component" value="Unplaced"/>
</dbReference>
<dbReference type="Proteomes" id="UP000694726">
    <property type="component" value="Unplaced"/>
</dbReference>
<dbReference type="Proteomes" id="UP000694727">
    <property type="component" value="Unplaced"/>
</dbReference>
<dbReference type="Proteomes" id="UP000694728">
    <property type="component" value="Unplaced"/>
</dbReference>
<dbReference type="GO" id="GO:0005737">
    <property type="term" value="C:cytoplasm"/>
    <property type="evidence" value="ECO:0007669"/>
    <property type="project" value="UniProtKB-SubCell"/>
</dbReference>
<dbReference type="GO" id="GO:0020037">
    <property type="term" value="F:heme binding"/>
    <property type="evidence" value="ECO:0000250"/>
    <property type="project" value="UniProtKB"/>
</dbReference>
<dbReference type="FunFam" id="3.20.80.10:FF:000003">
    <property type="entry name" value="Heme-binding protein 1"/>
    <property type="match status" value="1"/>
</dbReference>
<dbReference type="Gene3D" id="3.20.80.10">
    <property type="entry name" value="Regulatory factor, effector binding domain"/>
    <property type="match status" value="1"/>
</dbReference>
<dbReference type="InterPro" id="IPR011256">
    <property type="entry name" value="Reg_factor_effector_dom_sf"/>
</dbReference>
<dbReference type="InterPro" id="IPR006917">
    <property type="entry name" value="SOUL_haem-bd"/>
</dbReference>
<dbReference type="PANTHER" id="PTHR11220:SF22">
    <property type="entry name" value="HEME-BINDING PROTEIN 1"/>
    <property type="match status" value="1"/>
</dbReference>
<dbReference type="PANTHER" id="PTHR11220">
    <property type="entry name" value="HEME-BINDING PROTEIN-RELATED"/>
    <property type="match status" value="1"/>
</dbReference>
<dbReference type="Pfam" id="PF04832">
    <property type="entry name" value="SOUL"/>
    <property type="match status" value="1"/>
</dbReference>
<dbReference type="SUPFAM" id="SSF55136">
    <property type="entry name" value="Probable bacterial effector-binding domain"/>
    <property type="match status" value="1"/>
</dbReference>
<name>HEBP1_PIG</name>
<reference key="1">
    <citation type="journal article" date="2005" name="J. Exp. Med.">
        <title>Identification and characterization of an endogenous chemotactic ligand specific for FPRL2.</title>
        <authorList>
            <person name="Migeotte I."/>
            <person name="Riboldi E."/>
            <person name="Franssen J.-D."/>
            <person name="Gregoire F."/>
            <person name="Loison C."/>
            <person name="Wittamer V."/>
            <person name="Detheux M."/>
            <person name="Robberecht P."/>
            <person name="Costagliola S."/>
            <person name="Vassart G."/>
            <person name="Sozzani S."/>
            <person name="Parmentier M."/>
            <person name="Communi D."/>
        </authorList>
    </citation>
    <scope>NUCLEOTIDE SEQUENCE [MRNA]</scope>
</reference>
<protein>
    <recommendedName>
        <fullName>Heme-binding protein 1</fullName>
    </recommendedName>
</protein>
<keyword id="KW-0963">Cytoplasm</keyword>
<keyword id="KW-1185">Reference proteome</keyword>
<feature type="chain" id="PRO_0000116899" description="Heme-binding protein 1">
    <location>
        <begin position="1"/>
        <end position="189"/>
    </location>
</feature>
<organism>
    <name type="scientific">Sus scrofa</name>
    <name type="common">Pig</name>
    <dbReference type="NCBI Taxonomy" id="9823"/>
    <lineage>
        <taxon>Eukaryota</taxon>
        <taxon>Metazoa</taxon>
        <taxon>Chordata</taxon>
        <taxon>Craniata</taxon>
        <taxon>Vertebrata</taxon>
        <taxon>Euteleostomi</taxon>
        <taxon>Mammalia</taxon>
        <taxon>Eutheria</taxon>
        <taxon>Laurasiatheria</taxon>
        <taxon>Artiodactyla</taxon>
        <taxon>Suina</taxon>
        <taxon>Suidae</taxon>
        <taxon>Sus</taxon>
    </lineage>
</organism>
<gene>
    <name type="primary">HEBP1</name>
</gene>
<accession>Q5ISC6</accession>